<dbReference type="EMBL" id="AAHF01000004">
    <property type="protein sequence ID" value="EAL90248.1"/>
    <property type="molecule type" value="Genomic_DNA"/>
</dbReference>
<dbReference type="RefSeq" id="XP_752286.1">
    <property type="nucleotide sequence ID" value="XM_747193.1"/>
</dbReference>
<dbReference type="SMR" id="Q4WTI4"/>
<dbReference type="EnsemblFungi" id="EAL90248">
    <property type="protein sequence ID" value="EAL90248"/>
    <property type="gene ID" value="AFUA_1G09190"/>
</dbReference>
<dbReference type="GeneID" id="3510605"/>
<dbReference type="KEGG" id="afm:AFUA_1G09190"/>
<dbReference type="VEuPathDB" id="FungiDB:Afu1g09190"/>
<dbReference type="eggNOG" id="ENOG502SE9E">
    <property type="taxonomic scope" value="Eukaryota"/>
</dbReference>
<dbReference type="HOGENOM" id="CLU_026660_1_0_1"/>
<dbReference type="InParanoid" id="Q4WTI4"/>
<dbReference type="OMA" id="PKRHAAC"/>
<dbReference type="OrthoDB" id="10261408at2759"/>
<dbReference type="PHI-base" id="PHI:10627"/>
<dbReference type="Proteomes" id="UP000002530">
    <property type="component" value="Chromosome 1"/>
</dbReference>
<dbReference type="GO" id="GO:0005634">
    <property type="term" value="C:nucleus"/>
    <property type="evidence" value="ECO:0000318"/>
    <property type="project" value="GO_Central"/>
</dbReference>
<dbReference type="GO" id="GO:0003677">
    <property type="term" value="F:DNA binding"/>
    <property type="evidence" value="ECO:0007669"/>
    <property type="project" value="UniProtKB-KW"/>
</dbReference>
<dbReference type="GO" id="GO:0000981">
    <property type="term" value="F:DNA-binding transcription factor activity, RNA polymerase II-specific"/>
    <property type="evidence" value="ECO:0007669"/>
    <property type="project" value="InterPro"/>
</dbReference>
<dbReference type="GO" id="GO:0008270">
    <property type="term" value="F:zinc ion binding"/>
    <property type="evidence" value="ECO:0007669"/>
    <property type="project" value="InterPro"/>
</dbReference>
<dbReference type="GO" id="GO:0045944">
    <property type="term" value="P:positive regulation of transcription by RNA polymerase II"/>
    <property type="evidence" value="ECO:0000318"/>
    <property type="project" value="GO_Central"/>
</dbReference>
<dbReference type="CDD" id="cd00067">
    <property type="entry name" value="GAL4"/>
    <property type="match status" value="1"/>
</dbReference>
<dbReference type="Gene3D" id="4.10.240.10">
    <property type="entry name" value="Zn(2)-C6 fungal-type DNA-binding domain"/>
    <property type="match status" value="1"/>
</dbReference>
<dbReference type="InterPro" id="IPR051711">
    <property type="entry name" value="Stress_Response_Reg"/>
</dbReference>
<dbReference type="InterPro" id="IPR036864">
    <property type="entry name" value="Zn2-C6_fun-type_DNA-bd_sf"/>
</dbReference>
<dbReference type="InterPro" id="IPR001138">
    <property type="entry name" value="Zn2Cys6_DnaBD"/>
</dbReference>
<dbReference type="PANTHER" id="PTHR47540">
    <property type="entry name" value="THIAMINE REPRESSIBLE GENES REGULATORY PROTEIN THI5"/>
    <property type="match status" value="1"/>
</dbReference>
<dbReference type="PANTHER" id="PTHR47540:SF4">
    <property type="entry name" value="TRANSCRIPTION FACTOR RGLT"/>
    <property type="match status" value="1"/>
</dbReference>
<dbReference type="Pfam" id="PF00172">
    <property type="entry name" value="Zn_clus"/>
    <property type="match status" value="1"/>
</dbReference>
<dbReference type="SMART" id="SM00066">
    <property type="entry name" value="GAL4"/>
    <property type="match status" value="1"/>
</dbReference>
<dbReference type="SUPFAM" id="SSF57701">
    <property type="entry name" value="Zn2/Cys6 DNA-binding domain"/>
    <property type="match status" value="1"/>
</dbReference>
<dbReference type="PROSITE" id="PS00463">
    <property type="entry name" value="ZN2_CY6_FUNGAL_1"/>
    <property type="match status" value="1"/>
</dbReference>
<dbReference type="PROSITE" id="PS50048">
    <property type="entry name" value="ZN2_CY6_FUNGAL_2"/>
    <property type="match status" value="1"/>
</dbReference>
<proteinExistence type="inferred from homology"/>
<organism>
    <name type="scientific">Aspergillus fumigatus (strain ATCC MYA-4609 / CBS 101355 / FGSC A1100 / Af293)</name>
    <name type="common">Neosartorya fumigata</name>
    <dbReference type="NCBI Taxonomy" id="330879"/>
    <lineage>
        <taxon>Eukaryota</taxon>
        <taxon>Fungi</taxon>
        <taxon>Dikarya</taxon>
        <taxon>Ascomycota</taxon>
        <taxon>Pezizomycotina</taxon>
        <taxon>Eurotiomycetes</taxon>
        <taxon>Eurotiomycetidae</taxon>
        <taxon>Eurotiales</taxon>
        <taxon>Aspergillaceae</taxon>
        <taxon>Aspergillus</taxon>
        <taxon>Aspergillus subgen. Fumigati</taxon>
    </lineage>
</organism>
<gene>
    <name evidence="4" type="primary">rglT</name>
    <name type="ORF">AFUA_1G09190</name>
</gene>
<reference key="1">
    <citation type="journal article" date="2005" name="Nature">
        <title>Genomic sequence of the pathogenic and allergenic filamentous fungus Aspergillus fumigatus.</title>
        <authorList>
            <person name="Nierman W.C."/>
            <person name="Pain A."/>
            <person name="Anderson M.J."/>
            <person name="Wortman J.R."/>
            <person name="Kim H.S."/>
            <person name="Arroyo J."/>
            <person name="Berriman M."/>
            <person name="Abe K."/>
            <person name="Archer D.B."/>
            <person name="Bermejo C."/>
            <person name="Bennett J.W."/>
            <person name="Bowyer P."/>
            <person name="Chen D."/>
            <person name="Collins M."/>
            <person name="Coulsen R."/>
            <person name="Davies R."/>
            <person name="Dyer P.S."/>
            <person name="Farman M.L."/>
            <person name="Fedorova N."/>
            <person name="Fedorova N.D."/>
            <person name="Feldblyum T.V."/>
            <person name="Fischer R."/>
            <person name="Fosker N."/>
            <person name="Fraser A."/>
            <person name="Garcia J.L."/>
            <person name="Garcia M.J."/>
            <person name="Goble A."/>
            <person name="Goldman G.H."/>
            <person name="Gomi K."/>
            <person name="Griffith-Jones S."/>
            <person name="Gwilliam R."/>
            <person name="Haas B.J."/>
            <person name="Haas H."/>
            <person name="Harris D.E."/>
            <person name="Horiuchi H."/>
            <person name="Huang J."/>
            <person name="Humphray S."/>
            <person name="Jimenez J."/>
            <person name="Keller N."/>
            <person name="Khouri H."/>
            <person name="Kitamoto K."/>
            <person name="Kobayashi T."/>
            <person name="Konzack S."/>
            <person name="Kulkarni R."/>
            <person name="Kumagai T."/>
            <person name="Lafton A."/>
            <person name="Latge J.-P."/>
            <person name="Li W."/>
            <person name="Lord A."/>
            <person name="Lu C."/>
            <person name="Majoros W.H."/>
            <person name="May G.S."/>
            <person name="Miller B.L."/>
            <person name="Mohamoud Y."/>
            <person name="Molina M."/>
            <person name="Monod M."/>
            <person name="Mouyna I."/>
            <person name="Mulligan S."/>
            <person name="Murphy L.D."/>
            <person name="O'Neil S."/>
            <person name="Paulsen I."/>
            <person name="Penalva M.A."/>
            <person name="Pertea M."/>
            <person name="Price C."/>
            <person name="Pritchard B.L."/>
            <person name="Quail M.A."/>
            <person name="Rabbinowitsch E."/>
            <person name="Rawlins N."/>
            <person name="Rajandream M.A."/>
            <person name="Reichard U."/>
            <person name="Renauld H."/>
            <person name="Robson G.D."/>
            <person name="Rodriguez de Cordoba S."/>
            <person name="Rodriguez-Pena J.M."/>
            <person name="Ronning C.M."/>
            <person name="Rutter S."/>
            <person name="Salzberg S.L."/>
            <person name="Sanchez M."/>
            <person name="Sanchez-Ferrero J.C."/>
            <person name="Saunders D."/>
            <person name="Seeger K."/>
            <person name="Squares R."/>
            <person name="Squares S."/>
            <person name="Takeuchi M."/>
            <person name="Tekaia F."/>
            <person name="Turner G."/>
            <person name="Vazquez de Aldana C.R."/>
            <person name="Weidman J."/>
            <person name="White O."/>
            <person name="Woodward J.R."/>
            <person name="Yu J.-H."/>
            <person name="Fraser C.M."/>
            <person name="Galagan J.E."/>
            <person name="Asai K."/>
            <person name="Machida M."/>
            <person name="Hall N."/>
            <person name="Barrell B.G."/>
            <person name="Denning D.W."/>
        </authorList>
    </citation>
    <scope>NUCLEOTIDE SEQUENCE [LARGE SCALE GENOMIC DNA]</scope>
    <source>
        <strain>ATCC MYA-4609 / CBS 101355 / FGSC A1100 / Af293</strain>
    </source>
</reference>
<reference key="2">
    <citation type="journal article" date="2020" name="PLoS Pathog.">
        <title>The Aspergillus fumigatus transcription factor RglT is important for gliotoxin biosynthesis and self-protection, and virulence.</title>
        <authorList>
            <person name="Ries L.N.A."/>
            <person name="Pardeshi L."/>
            <person name="Dong Z."/>
            <person name="Tan K."/>
            <person name="Steenwyk J.L."/>
            <person name="Colabardini A.C."/>
            <person name="Ferreira Filho J.A."/>
            <person name="de Castro P.A."/>
            <person name="Silva L.P."/>
            <person name="Preite N.W."/>
            <person name="Almeida F."/>
            <person name="de Assis L.J."/>
            <person name="Dos Santos R.A.C."/>
            <person name="Bowyer P."/>
            <person name="Bromley M."/>
            <person name="Owens R.A."/>
            <person name="Doyle S."/>
            <person name="Demasi M."/>
            <person name="Hernandez D.C.R."/>
            <person name="Netto L.E.S."/>
            <person name="Pupo M.T."/>
            <person name="Rokas A."/>
            <person name="Loures F.V."/>
            <person name="Wong K.H."/>
            <person name="Goldman G.H."/>
        </authorList>
    </citation>
    <scope>FUNCTION</scope>
    <scope>DISRUPTION PHENOTYPE</scope>
    <scope>SUBCELLULAR LOCATION</scope>
</reference>
<evidence type="ECO:0000255" key="1">
    <source>
        <dbReference type="PROSITE-ProRule" id="PRU00227"/>
    </source>
</evidence>
<evidence type="ECO:0000256" key="2">
    <source>
        <dbReference type="SAM" id="MobiDB-lite"/>
    </source>
</evidence>
<evidence type="ECO:0000269" key="3">
    <source>
    </source>
</evidence>
<evidence type="ECO:0000303" key="4">
    <source>
    </source>
</evidence>
<feature type="chain" id="PRO_0000454486" description="Transcription factor rglT">
    <location>
        <begin position="1"/>
        <end position="410"/>
    </location>
</feature>
<feature type="DNA-binding region" description="Zn(2)-C6 fungal-type" evidence="1">
    <location>
        <begin position="28"/>
        <end position="55"/>
    </location>
</feature>
<feature type="region of interest" description="Disordered" evidence="2">
    <location>
        <begin position="1"/>
        <end position="24"/>
    </location>
</feature>
<feature type="region of interest" description="Disordered" evidence="2">
    <location>
        <begin position="353"/>
        <end position="372"/>
    </location>
</feature>
<feature type="compositionally biased region" description="Polar residues" evidence="2">
    <location>
        <begin position="358"/>
        <end position="369"/>
    </location>
</feature>
<sequence>MQFDSLPLPPSSSHDTTSVPPLKRHAACDECRKRKLKCSGEATGCSRCLKQSLPCHYSLQKPMGRPPKKRPREDNDASVYEITDNGMWADIDDGGILTEEAGAEATAASDALRLCPPVYTAPMRMPQAFPNLLSTDDSHNHLWQLESGRSLDPIPATTGPWPDFSSVTAATSSPFTLPSSLTLIDSPSVSSPSSDGGNSSQCTCLSYLYLCLSHLSSLAPFPISQHTLCSLFIAAKTARAVIRCEVCPTSFALGMQNVMFTGTLLNVIADAWLRVSQADAEELGKLAAPPAYVASVTQNSPNPAEAWKDWLRQTVRSAITGGPADPAGQVKCSDSPTLLSLIEEMEARQHRWHRTRTVESPNEPGSCSPVSHEDHREEDMLCFRVIRSARDVIAKFEFAPHEYPEGVVPV</sequence>
<protein>
    <recommendedName>
        <fullName evidence="4">Transcription factor rglT</fullName>
    </recommendedName>
    <alternativeName>
        <fullName evidence="4">Regulator of gliotoxin</fullName>
    </alternativeName>
</protein>
<comment type="function">
    <text evidence="3">Transcription factor that is involved in protection against oxidative stress (PubMed:32667960). Binds to promoter regions of the gliotoxin (GT) biosynthetic genes gliZ, gliF, gliT, gliM, gliA and gtmA (PubMed:32667960). Two related but different DNA motifs (5'-TCGG-3' and 5'-CGGNCGG-3') are specifically enriched among rglT binding sites in GT-inducing conditions (PubMed:32667960). Also indirectly regulates the expression of gliP, gliG, gliH and gliN (PubMed:32667960). Plays a key role in resistance against exogenously-added GT and GT biosynthesis, mainly through the direct regulation of gliT (PubMed:32667960). Furthermore, rglT is important for virulence in chemotherapeutic mice with invasive pulmonary aspergillosis (IPA) (PubMed:32667960).</text>
</comment>
<comment type="subcellular location">
    <subcellularLocation>
        <location evidence="1 3">Nucleus</location>
    </subcellularLocation>
</comment>
<comment type="disruption phenotype">
    <text evidence="3">Leads to high sensitivity to allyl alcohol, a compound indicative for potential defects in carbon catabolite repression (CCR), but does not affect growth in non-stress conditions, nor in the presence of 2-deoxyglucose (2DG), an additional indicator for defects in CCR (PubMed:32667960). Also leads to sensitivity to acrolein, menadione and t-butyl hydroperoxide (PubMed:32667960). Abolishes the production of gliotoxin (GT) and accumulates bisdethiobis(methylthio)-gliotoxin (BmGT) (PubMed:32667960). Leads to reduced expression of gliZ, gliT, gliF and gtmA in GT-inducing conditions (PubMed:32667960). Loses all ability to protect itself against exogenously added GT as well and reduces virulence (PubMed:32667960).</text>
</comment>
<name>RGLT_ASPFU</name>
<keyword id="KW-0238">DNA-binding</keyword>
<keyword id="KW-0539">Nucleus</keyword>
<keyword id="KW-1185">Reference proteome</keyword>
<keyword id="KW-0804">Transcription</keyword>
<keyword id="KW-0805">Transcription regulation</keyword>
<keyword id="KW-0843">Virulence</keyword>
<keyword id="KW-0862">Zinc</keyword>
<accession>Q4WTI4</accession>